<feature type="signal peptide" evidence="6">
    <location>
        <begin position="1"/>
        <end position="22"/>
    </location>
</feature>
<feature type="peptide" id="PRO_0000439148" description="RYamide-1" evidence="1 7">
    <location>
        <begin position="25"/>
        <end position="33"/>
    </location>
</feature>
<feature type="propeptide" id="PRO_0000439149" evidence="5">
    <location>
        <begin position="36"/>
        <end position="53"/>
    </location>
</feature>
<feature type="peptide" id="PRO_0000439150" description="RYamide-2" evidence="1 7">
    <location>
        <begin position="54"/>
        <end position="63"/>
    </location>
</feature>
<feature type="propeptide" id="PRO_0000439151" evidence="5">
    <location>
        <begin position="67"/>
        <end position="109"/>
    </location>
</feature>
<feature type="modified residue" description="Tyrosine amide" evidence="6 7">
    <location>
        <position position="33"/>
    </location>
</feature>
<feature type="modified residue" description="Tyrosine amide" evidence="6 7">
    <location>
        <position position="63"/>
    </location>
</feature>
<keyword id="KW-0027">Amidation</keyword>
<keyword id="KW-0165">Cleavage on pair of basic residues</keyword>
<keyword id="KW-0903">Direct protein sequencing</keyword>
<keyword id="KW-0527">Neuropeptide</keyword>
<keyword id="KW-1185">Reference proteome</keyword>
<keyword id="KW-0964">Secreted</keyword>
<keyword id="KW-0732">Signal</keyword>
<sequence length="109" mass="13167">MNECVNKLLHLKFLFYFILGIQKRPVFFVASRYGRSTTYDESLKSRRIFIVPRNEHFFLGSRYGKRSGKYLCLSREINKLIVRKRLRNNDKERTPTLSFITKHFLMRNT</sequence>
<protein>
    <recommendedName>
        <fullName evidence="3 4">RYamide neuropeptides</fullName>
    </recommendedName>
    <alternativeName>
        <fullName evidence="3 4">Neuropeptide Y-like receptor ligand</fullName>
    </alternativeName>
    <component>
        <recommendedName>
            <fullName evidence="3 4">RYamide-1</fullName>
        </recommendedName>
    </component>
    <component>
        <recommendedName>
            <fullName evidence="3 4">RYamide-2</fullName>
        </recommendedName>
    </component>
</protein>
<evidence type="ECO:0000269" key="1">
    <source>
    </source>
</evidence>
<evidence type="ECO:0000269" key="2">
    <source>
    </source>
</evidence>
<evidence type="ECO:0000303" key="3">
    <source>
    </source>
</evidence>
<evidence type="ECO:0000303" key="4">
    <source>
    </source>
</evidence>
<evidence type="ECO:0000305" key="5"/>
<evidence type="ECO:0000305" key="6">
    <source>
    </source>
</evidence>
<evidence type="ECO:0000305" key="7">
    <source>
    </source>
</evidence>
<evidence type="ECO:0000312" key="8">
    <source>
        <dbReference type="EMBL" id="AEP22449.1"/>
    </source>
</evidence>
<evidence type="ECO:0000312" key="9">
    <source>
        <dbReference type="EMBL" id="BAM66571.1"/>
    </source>
</evidence>
<evidence type="ECO:0000312" key="10">
    <source>
        <dbReference type="FlyBase" id="FBgn0085512"/>
    </source>
</evidence>
<evidence type="ECO:0000312" key="11">
    <source>
        <dbReference type="Proteomes" id="UP000000803"/>
    </source>
</evidence>
<reference evidence="8" key="1">
    <citation type="journal article" date="2011" name="Biochem. Biophys. Res. Commun.">
        <title>Identification of the Drosophila and Tribolium receptors for the recently discovered insect RYamide neuropeptides.</title>
        <authorList>
            <person name="Collin C."/>
            <person name="Hauser F."/>
            <person name="Krogh-Meyer P."/>
            <person name="Hansen K.K."/>
            <person name="Gonzalez de Valdivia E."/>
            <person name="Williamson M."/>
            <person name="Grimmelikhuijzen C.J."/>
        </authorList>
    </citation>
    <scope>NUCLEOTIDE SEQUENCE [MRNA]</scope>
    <scope>SYNTHESIS OF RYAMIDE-1 AND RYAMIDE-2</scope>
    <scope>FUNCTION</scope>
    <scope>SUBCELLULAR LOCATION</scope>
    <scope>AMIDATION AT TYR-33 AND TYR-63</scope>
</reference>
<reference evidence="9" key="2">
    <citation type="journal article" date="2011" name="Biochem. Biophys. Res. Commun.">
        <title>Identification of the novel bioactive peptides dRYamide-1 and dRYamide-2, ligands for a neuropeptide Y-like receptor in Drosophila.</title>
        <authorList>
            <person name="Ida T."/>
            <person name="Takahashi T."/>
            <person name="Tominaga H."/>
            <person name="Sato T."/>
            <person name="Kume K."/>
            <person name="Ozaki M."/>
            <person name="Hiraguchi T."/>
            <person name="Maeda T."/>
            <person name="Shiotani H."/>
            <person name="Terajima S."/>
            <person name="Sano H."/>
            <person name="Mori K."/>
            <person name="Yoshida M."/>
            <person name="Miyazato M."/>
            <person name="Kato J."/>
            <person name="Murakami N."/>
            <person name="Kangawa K."/>
            <person name="Kojima M."/>
        </authorList>
    </citation>
    <scope>NUCLEOTIDE SEQUENCE [MRNA]</scope>
    <scope>PROTEIN SEQUENCE OF 25-33 AND 54-63</scope>
    <scope>SYNTHESIS OF RYAMIDE-1 AND RYAMIDE-2</scope>
    <scope>FUNCTION</scope>
    <scope>SUBCELLULAR LOCATION</scope>
    <scope>AMIDATION AT TYR-33 AND TYR-63</scope>
</reference>
<reference evidence="11" key="3">
    <citation type="journal article" date="2000" name="Science">
        <title>The genome sequence of Drosophila melanogaster.</title>
        <authorList>
            <person name="Adams M.D."/>
            <person name="Celniker S.E."/>
            <person name="Holt R.A."/>
            <person name="Evans C.A."/>
            <person name="Gocayne J.D."/>
            <person name="Amanatides P.G."/>
            <person name="Scherer S.E."/>
            <person name="Li P.W."/>
            <person name="Hoskins R.A."/>
            <person name="Galle R.F."/>
            <person name="George R.A."/>
            <person name="Lewis S.E."/>
            <person name="Richards S."/>
            <person name="Ashburner M."/>
            <person name="Henderson S.N."/>
            <person name="Sutton G.G."/>
            <person name="Wortman J.R."/>
            <person name="Yandell M.D."/>
            <person name="Zhang Q."/>
            <person name="Chen L.X."/>
            <person name="Brandon R.C."/>
            <person name="Rogers Y.-H.C."/>
            <person name="Blazej R.G."/>
            <person name="Champe M."/>
            <person name="Pfeiffer B.D."/>
            <person name="Wan K.H."/>
            <person name="Doyle C."/>
            <person name="Baxter E.G."/>
            <person name="Helt G."/>
            <person name="Nelson C.R."/>
            <person name="Miklos G.L.G."/>
            <person name="Abril J.F."/>
            <person name="Agbayani A."/>
            <person name="An H.-J."/>
            <person name="Andrews-Pfannkoch C."/>
            <person name="Baldwin D."/>
            <person name="Ballew R.M."/>
            <person name="Basu A."/>
            <person name="Baxendale J."/>
            <person name="Bayraktaroglu L."/>
            <person name="Beasley E.M."/>
            <person name="Beeson K.Y."/>
            <person name="Benos P.V."/>
            <person name="Berman B.P."/>
            <person name="Bhandari D."/>
            <person name="Bolshakov S."/>
            <person name="Borkova D."/>
            <person name="Botchan M.R."/>
            <person name="Bouck J."/>
            <person name="Brokstein P."/>
            <person name="Brottier P."/>
            <person name="Burtis K.C."/>
            <person name="Busam D.A."/>
            <person name="Butler H."/>
            <person name="Cadieu E."/>
            <person name="Center A."/>
            <person name="Chandra I."/>
            <person name="Cherry J.M."/>
            <person name="Cawley S."/>
            <person name="Dahlke C."/>
            <person name="Davenport L.B."/>
            <person name="Davies P."/>
            <person name="de Pablos B."/>
            <person name="Delcher A."/>
            <person name="Deng Z."/>
            <person name="Mays A.D."/>
            <person name="Dew I."/>
            <person name="Dietz S.M."/>
            <person name="Dodson K."/>
            <person name="Doup L.E."/>
            <person name="Downes M."/>
            <person name="Dugan-Rocha S."/>
            <person name="Dunkov B.C."/>
            <person name="Dunn P."/>
            <person name="Durbin K.J."/>
            <person name="Evangelista C.C."/>
            <person name="Ferraz C."/>
            <person name="Ferriera S."/>
            <person name="Fleischmann W."/>
            <person name="Fosler C."/>
            <person name="Gabrielian A.E."/>
            <person name="Garg N.S."/>
            <person name="Gelbart W.M."/>
            <person name="Glasser K."/>
            <person name="Glodek A."/>
            <person name="Gong F."/>
            <person name="Gorrell J.H."/>
            <person name="Gu Z."/>
            <person name="Guan P."/>
            <person name="Harris M."/>
            <person name="Harris N.L."/>
            <person name="Harvey D.A."/>
            <person name="Heiman T.J."/>
            <person name="Hernandez J.R."/>
            <person name="Houck J."/>
            <person name="Hostin D."/>
            <person name="Houston K.A."/>
            <person name="Howland T.J."/>
            <person name="Wei M.-H."/>
            <person name="Ibegwam C."/>
            <person name="Jalali M."/>
            <person name="Kalush F."/>
            <person name="Karpen G.H."/>
            <person name="Ke Z."/>
            <person name="Kennison J.A."/>
            <person name="Ketchum K.A."/>
            <person name="Kimmel B.E."/>
            <person name="Kodira C.D."/>
            <person name="Kraft C.L."/>
            <person name="Kravitz S."/>
            <person name="Kulp D."/>
            <person name="Lai Z."/>
            <person name="Lasko P."/>
            <person name="Lei Y."/>
            <person name="Levitsky A.A."/>
            <person name="Li J.H."/>
            <person name="Li Z."/>
            <person name="Liang Y."/>
            <person name="Lin X."/>
            <person name="Liu X."/>
            <person name="Mattei B."/>
            <person name="McIntosh T.C."/>
            <person name="McLeod M.P."/>
            <person name="McPherson D."/>
            <person name="Merkulov G."/>
            <person name="Milshina N.V."/>
            <person name="Mobarry C."/>
            <person name="Morris J."/>
            <person name="Moshrefi A."/>
            <person name="Mount S.M."/>
            <person name="Moy M."/>
            <person name="Murphy B."/>
            <person name="Murphy L."/>
            <person name="Muzny D.M."/>
            <person name="Nelson D.L."/>
            <person name="Nelson D.R."/>
            <person name="Nelson K.A."/>
            <person name="Nixon K."/>
            <person name="Nusskern D.R."/>
            <person name="Pacleb J.M."/>
            <person name="Palazzolo M."/>
            <person name="Pittman G.S."/>
            <person name="Pan S."/>
            <person name="Pollard J."/>
            <person name="Puri V."/>
            <person name="Reese M.G."/>
            <person name="Reinert K."/>
            <person name="Remington K."/>
            <person name="Saunders R.D.C."/>
            <person name="Scheeler F."/>
            <person name="Shen H."/>
            <person name="Shue B.C."/>
            <person name="Siden-Kiamos I."/>
            <person name="Simpson M."/>
            <person name="Skupski M.P."/>
            <person name="Smith T.J."/>
            <person name="Spier E."/>
            <person name="Spradling A.C."/>
            <person name="Stapleton M."/>
            <person name="Strong R."/>
            <person name="Sun E."/>
            <person name="Svirskas R."/>
            <person name="Tector C."/>
            <person name="Turner R."/>
            <person name="Venter E."/>
            <person name="Wang A.H."/>
            <person name="Wang X."/>
            <person name="Wang Z.-Y."/>
            <person name="Wassarman D.A."/>
            <person name="Weinstock G.M."/>
            <person name="Weissenbach J."/>
            <person name="Williams S.M."/>
            <person name="Woodage T."/>
            <person name="Worley K.C."/>
            <person name="Wu D."/>
            <person name="Yang S."/>
            <person name="Yao Q.A."/>
            <person name="Ye J."/>
            <person name="Yeh R.-F."/>
            <person name="Zaveri J.S."/>
            <person name="Zhan M."/>
            <person name="Zhang G."/>
            <person name="Zhao Q."/>
            <person name="Zheng L."/>
            <person name="Zheng X.H."/>
            <person name="Zhong F.N."/>
            <person name="Zhong W."/>
            <person name="Zhou X."/>
            <person name="Zhu S.C."/>
            <person name="Zhu X."/>
            <person name="Smith H.O."/>
            <person name="Gibbs R.A."/>
            <person name="Myers E.W."/>
            <person name="Rubin G.M."/>
            <person name="Venter J.C."/>
        </authorList>
    </citation>
    <scope>NUCLEOTIDE SEQUENCE [LARGE SCALE GENOMIC DNA]</scope>
    <source>
        <strain evidence="11">Berkeley</strain>
    </source>
</reference>
<reference evidence="11" key="4">
    <citation type="journal article" date="2002" name="Genome Biol.">
        <title>Annotation of the Drosophila melanogaster euchromatic genome: a systematic review.</title>
        <authorList>
            <person name="Misra S."/>
            <person name="Crosby M.A."/>
            <person name="Mungall C.J."/>
            <person name="Matthews B.B."/>
            <person name="Campbell K.S."/>
            <person name="Hradecky P."/>
            <person name="Huang Y."/>
            <person name="Kaminker J.S."/>
            <person name="Millburn G.H."/>
            <person name="Prochnik S.E."/>
            <person name="Smith C.D."/>
            <person name="Tupy J.L."/>
            <person name="Whitfield E.J."/>
            <person name="Bayraktaroglu L."/>
            <person name="Berman B.P."/>
            <person name="Bettencourt B.R."/>
            <person name="Celniker S.E."/>
            <person name="de Grey A.D.N.J."/>
            <person name="Drysdale R.A."/>
            <person name="Harris N.L."/>
            <person name="Richter J."/>
            <person name="Russo S."/>
            <person name="Schroeder A.J."/>
            <person name="Shu S.Q."/>
            <person name="Stapleton M."/>
            <person name="Yamada C."/>
            <person name="Ashburner M."/>
            <person name="Gelbart W.M."/>
            <person name="Rubin G.M."/>
            <person name="Lewis S.E."/>
        </authorList>
    </citation>
    <scope>GENOME REANNOTATION</scope>
    <source>
        <strain evidence="11">Berkeley</strain>
    </source>
</reference>
<organism evidence="11">
    <name type="scientific">Drosophila melanogaster</name>
    <name type="common">Fruit fly</name>
    <dbReference type="NCBI Taxonomy" id="7227"/>
    <lineage>
        <taxon>Eukaryota</taxon>
        <taxon>Metazoa</taxon>
        <taxon>Ecdysozoa</taxon>
        <taxon>Arthropoda</taxon>
        <taxon>Hexapoda</taxon>
        <taxon>Insecta</taxon>
        <taxon>Pterygota</taxon>
        <taxon>Neoptera</taxon>
        <taxon>Endopterygota</taxon>
        <taxon>Diptera</taxon>
        <taxon>Brachycera</taxon>
        <taxon>Muscomorpha</taxon>
        <taxon>Ephydroidea</taxon>
        <taxon>Drosophilidae</taxon>
        <taxon>Drosophila</taxon>
        <taxon>Sophophora</taxon>
    </lineage>
</organism>
<gene>
    <name evidence="3 4" type="primary">RYa</name>
    <name evidence="3" type="synonym">NepYr</name>
    <name evidence="10" type="ORF">CG40733</name>
</gene>
<name>RYA_DROME</name>
<accession>G5CKU5</accession>
<accession>A8Y508</accession>
<accession>V9I0I4</accession>
<dbReference type="EMBL" id="HQ698845">
    <property type="protein sequence ID" value="ADZ15313.1"/>
    <property type="molecule type" value="mRNA"/>
</dbReference>
<dbReference type="EMBL" id="JN222358">
    <property type="protein sequence ID" value="AEP22449.1"/>
    <property type="molecule type" value="mRNA"/>
</dbReference>
<dbReference type="EMBL" id="AB638268">
    <property type="protein sequence ID" value="BAM66571.1"/>
    <property type="molecule type" value="mRNA"/>
</dbReference>
<dbReference type="EMBL" id="AE013599">
    <property type="protein sequence ID" value="EDP28140.3"/>
    <property type="molecule type" value="Genomic_DNA"/>
</dbReference>
<dbReference type="RefSeq" id="NP_001104382.3">
    <property type="nucleotide sequence ID" value="NM_001110912.3"/>
</dbReference>
<dbReference type="FunCoup" id="G5CKU5">
    <property type="interactions" value="16"/>
</dbReference>
<dbReference type="STRING" id="7227.FBpp0302660"/>
<dbReference type="PaxDb" id="7227-FBpp0302660"/>
<dbReference type="EnsemblMetazoa" id="FBtr0310523">
    <property type="protein sequence ID" value="FBpp0302660"/>
    <property type="gene ID" value="FBgn0085512"/>
</dbReference>
<dbReference type="GeneID" id="5740597"/>
<dbReference type="KEGG" id="dme:Dmel_CG40733"/>
<dbReference type="AGR" id="FB:FBgn0085512"/>
<dbReference type="CTD" id="5740597"/>
<dbReference type="FlyBase" id="FBgn0085512">
    <property type="gene designation" value="RYa"/>
</dbReference>
<dbReference type="VEuPathDB" id="VectorBase:FBgn0085512"/>
<dbReference type="HOGENOM" id="CLU_2186633_0_0_1"/>
<dbReference type="InParanoid" id="G5CKU5"/>
<dbReference type="OrthoDB" id="6350276at2759"/>
<dbReference type="ChiTaRS" id="RYa-R">
    <property type="organism name" value="fly"/>
</dbReference>
<dbReference type="GenomeRNAi" id="5740597"/>
<dbReference type="PRO" id="PR:G5CKU5"/>
<dbReference type="Proteomes" id="UP000000803">
    <property type="component" value="Chromosome 2R"/>
</dbReference>
<dbReference type="Bgee" id="FBgn0085512">
    <property type="expression patterns" value="Expressed in adult tracheocyte (Drosophila) in ovary and 24 other cell types or tissues"/>
</dbReference>
<dbReference type="GO" id="GO:0005576">
    <property type="term" value="C:extracellular region"/>
    <property type="evidence" value="ECO:0000305"/>
    <property type="project" value="FlyBase"/>
</dbReference>
<dbReference type="GO" id="GO:0005615">
    <property type="term" value="C:extracellular space"/>
    <property type="evidence" value="ECO:0000305"/>
    <property type="project" value="FlyBase"/>
</dbReference>
<dbReference type="GO" id="GO:0048018">
    <property type="term" value="F:receptor ligand activity"/>
    <property type="evidence" value="ECO:0000353"/>
    <property type="project" value="FlyBase"/>
</dbReference>
<dbReference type="GO" id="GO:0007186">
    <property type="term" value="P:G protein-coupled receptor signaling pathway"/>
    <property type="evidence" value="ECO:0000314"/>
    <property type="project" value="FlyBase"/>
</dbReference>
<dbReference type="GO" id="GO:2000252">
    <property type="term" value="P:negative regulation of feeding behavior"/>
    <property type="evidence" value="ECO:0000314"/>
    <property type="project" value="FlyBase"/>
</dbReference>
<dbReference type="GO" id="GO:0007218">
    <property type="term" value="P:neuropeptide signaling pathway"/>
    <property type="evidence" value="ECO:0007669"/>
    <property type="project" value="UniProtKB-KW"/>
</dbReference>
<proteinExistence type="evidence at protein level"/>
<comment type="function">
    <text evidence="1 2">Neuropeptides RYamide-1 and RYamide-2 are ligands for the G-protein coupled receptor RYa-R (PubMed:21704020, PubMed:21843505). May suppress feeding behavior (PubMed:21704020).</text>
</comment>
<comment type="subcellular location">
    <subcellularLocation>
        <location evidence="6 7">Secreted</location>
    </subcellularLocation>
</comment>